<reference key="1">
    <citation type="journal article" date="2007" name="PLoS ONE">
        <title>Complete genomic characterization of a pathogenic A.II strain of Francisella tularensis subspecies tularensis.</title>
        <authorList>
            <person name="Beckstrom-Sternberg S.M."/>
            <person name="Auerbach R.K."/>
            <person name="Godbole S."/>
            <person name="Pearson J.V."/>
            <person name="Beckstrom-Sternberg J.S."/>
            <person name="Deng Z."/>
            <person name="Munk C."/>
            <person name="Kubota K."/>
            <person name="Zhou Y."/>
            <person name="Bruce D."/>
            <person name="Noronha J."/>
            <person name="Scheuermann R.H."/>
            <person name="Wang A."/>
            <person name="Wei X."/>
            <person name="Wang J."/>
            <person name="Hao J."/>
            <person name="Wagner D.M."/>
            <person name="Brettin T.S."/>
            <person name="Brown N."/>
            <person name="Gilna P."/>
            <person name="Keim P.S."/>
        </authorList>
    </citation>
    <scope>NUCLEOTIDE SEQUENCE [LARGE SCALE GENOMIC DNA]</scope>
    <source>
        <strain>WY96-3418</strain>
    </source>
</reference>
<name>EFTS_FRATW</name>
<feature type="chain" id="PRO_1000006098" description="Elongation factor Ts">
    <location>
        <begin position="1"/>
        <end position="289"/>
    </location>
</feature>
<feature type="region of interest" description="Involved in Mg(2+) ion dislocation from EF-Tu" evidence="1">
    <location>
        <begin position="80"/>
        <end position="83"/>
    </location>
</feature>
<evidence type="ECO:0000255" key="1">
    <source>
        <dbReference type="HAMAP-Rule" id="MF_00050"/>
    </source>
</evidence>
<gene>
    <name evidence="1" type="primary">tsf</name>
    <name type="ordered locus">FTW_1768</name>
</gene>
<proteinExistence type="inferred from homology"/>
<keyword id="KW-0963">Cytoplasm</keyword>
<keyword id="KW-0251">Elongation factor</keyword>
<keyword id="KW-0648">Protein biosynthesis</keyword>
<accession>A4IZU5</accession>
<sequence length="289" mass="30988">MSNISAKLVKELRERTGAGMMECKKALVAAAGDIEKAAEEMRISGQAKADKKASRVAAEGVIEVYAADGRAILLEINSETDFVARDETFKKFAQEAVKAAHAANAKTIEEVLAAKTSNGETVEEVRKSLIAKIGENIQVRRVKTVEAETLGAYIHGSKIGVVAALEGGDEDLAKDVAMHVAAANPMVVSGDQVPADVVAKEKEIFTAQAKESGKPAEIIEKMIVGRIRKFLDEVALLGQDFVKDPAIKVEKLVKDKGAKVVNFIRLDVGEGIEKKEEDFAAEVMSQIKG</sequence>
<comment type="function">
    <text evidence="1">Associates with the EF-Tu.GDP complex and induces the exchange of GDP to GTP. It remains bound to the aminoacyl-tRNA.EF-Tu.GTP complex up to the GTP hydrolysis stage on the ribosome.</text>
</comment>
<comment type="subcellular location">
    <subcellularLocation>
        <location evidence="1">Cytoplasm</location>
    </subcellularLocation>
</comment>
<comment type="similarity">
    <text evidence="1">Belongs to the EF-Ts family.</text>
</comment>
<organism>
    <name type="scientific">Francisella tularensis subsp. tularensis (strain WY96-3418)</name>
    <dbReference type="NCBI Taxonomy" id="418136"/>
    <lineage>
        <taxon>Bacteria</taxon>
        <taxon>Pseudomonadati</taxon>
        <taxon>Pseudomonadota</taxon>
        <taxon>Gammaproteobacteria</taxon>
        <taxon>Thiotrichales</taxon>
        <taxon>Francisellaceae</taxon>
        <taxon>Francisella</taxon>
    </lineage>
</organism>
<dbReference type="EMBL" id="CP000608">
    <property type="protein sequence ID" value="ABO47444.1"/>
    <property type="molecule type" value="Genomic_DNA"/>
</dbReference>
<dbReference type="RefSeq" id="WP_003021614.1">
    <property type="nucleotide sequence ID" value="NC_009257.1"/>
</dbReference>
<dbReference type="SMR" id="A4IZU5"/>
<dbReference type="KEGG" id="ftw:FTW_1768"/>
<dbReference type="HOGENOM" id="CLU_047155_0_2_6"/>
<dbReference type="GO" id="GO:0005737">
    <property type="term" value="C:cytoplasm"/>
    <property type="evidence" value="ECO:0007669"/>
    <property type="project" value="UniProtKB-SubCell"/>
</dbReference>
<dbReference type="GO" id="GO:0003746">
    <property type="term" value="F:translation elongation factor activity"/>
    <property type="evidence" value="ECO:0007669"/>
    <property type="project" value="UniProtKB-UniRule"/>
</dbReference>
<dbReference type="CDD" id="cd14275">
    <property type="entry name" value="UBA_EF-Ts"/>
    <property type="match status" value="1"/>
</dbReference>
<dbReference type="FunFam" id="1.10.286.20:FF:000001">
    <property type="entry name" value="Elongation factor Ts"/>
    <property type="match status" value="1"/>
</dbReference>
<dbReference type="FunFam" id="1.10.8.10:FF:000001">
    <property type="entry name" value="Elongation factor Ts"/>
    <property type="match status" value="1"/>
</dbReference>
<dbReference type="Gene3D" id="1.10.286.20">
    <property type="match status" value="1"/>
</dbReference>
<dbReference type="Gene3D" id="1.10.8.10">
    <property type="entry name" value="DNA helicase RuvA subunit, C-terminal domain"/>
    <property type="match status" value="1"/>
</dbReference>
<dbReference type="Gene3D" id="3.30.479.20">
    <property type="entry name" value="Elongation factor Ts, dimerisation domain"/>
    <property type="match status" value="2"/>
</dbReference>
<dbReference type="HAMAP" id="MF_00050">
    <property type="entry name" value="EF_Ts"/>
    <property type="match status" value="1"/>
</dbReference>
<dbReference type="InterPro" id="IPR036402">
    <property type="entry name" value="EF-Ts_dimer_sf"/>
</dbReference>
<dbReference type="InterPro" id="IPR001816">
    <property type="entry name" value="Transl_elong_EFTs/EF1B"/>
</dbReference>
<dbReference type="InterPro" id="IPR014039">
    <property type="entry name" value="Transl_elong_EFTs/EF1B_dimer"/>
</dbReference>
<dbReference type="InterPro" id="IPR018101">
    <property type="entry name" value="Transl_elong_Ts_CS"/>
</dbReference>
<dbReference type="InterPro" id="IPR009060">
    <property type="entry name" value="UBA-like_sf"/>
</dbReference>
<dbReference type="NCBIfam" id="TIGR00116">
    <property type="entry name" value="tsf"/>
    <property type="match status" value="1"/>
</dbReference>
<dbReference type="PANTHER" id="PTHR11741">
    <property type="entry name" value="ELONGATION FACTOR TS"/>
    <property type="match status" value="1"/>
</dbReference>
<dbReference type="PANTHER" id="PTHR11741:SF0">
    <property type="entry name" value="ELONGATION FACTOR TS, MITOCHONDRIAL"/>
    <property type="match status" value="1"/>
</dbReference>
<dbReference type="Pfam" id="PF00889">
    <property type="entry name" value="EF_TS"/>
    <property type="match status" value="1"/>
</dbReference>
<dbReference type="SUPFAM" id="SSF54713">
    <property type="entry name" value="Elongation factor Ts (EF-Ts), dimerisation domain"/>
    <property type="match status" value="2"/>
</dbReference>
<dbReference type="SUPFAM" id="SSF46934">
    <property type="entry name" value="UBA-like"/>
    <property type="match status" value="1"/>
</dbReference>
<dbReference type="PROSITE" id="PS01126">
    <property type="entry name" value="EF_TS_1"/>
    <property type="match status" value="1"/>
</dbReference>
<dbReference type="PROSITE" id="PS01127">
    <property type="entry name" value="EF_TS_2"/>
    <property type="match status" value="1"/>
</dbReference>
<protein>
    <recommendedName>
        <fullName evidence="1">Elongation factor Ts</fullName>
        <shortName evidence="1">EF-Ts</shortName>
    </recommendedName>
</protein>